<proteinExistence type="evidence at protein level"/>
<dbReference type="EMBL" id="GQ229389">
    <property type="protein sequence ID" value="ACT10804.1"/>
    <property type="molecule type" value="mRNA"/>
</dbReference>
<dbReference type="EMBL" id="AL035521">
    <property type="protein sequence ID" value="CAB36716.1"/>
    <property type="status" value="ALT_SEQ"/>
    <property type="molecule type" value="Genomic_DNA"/>
</dbReference>
<dbReference type="EMBL" id="AL161585">
    <property type="protein sequence ID" value="CAB80156.1"/>
    <property type="status" value="ALT_SEQ"/>
    <property type="molecule type" value="Genomic_DNA"/>
</dbReference>
<dbReference type="EMBL" id="CP002687">
    <property type="protein sequence ID" value="AEE86367.1"/>
    <property type="molecule type" value="Genomic_DNA"/>
</dbReference>
<dbReference type="PIR" id="T04785">
    <property type="entry name" value="T04785"/>
</dbReference>
<dbReference type="RefSeq" id="NP_195165.2">
    <property type="nucleotide sequence ID" value="NM_119604.4"/>
</dbReference>
<dbReference type="SMR" id="C6KIE6"/>
<dbReference type="BioGRID" id="14871">
    <property type="interactions" value="5"/>
</dbReference>
<dbReference type="FunCoup" id="C6KIE6">
    <property type="interactions" value="91"/>
</dbReference>
<dbReference type="IntAct" id="C6KIE6">
    <property type="interactions" value="2"/>
</dbReference>
<dbReference type="STRING" id="3702.C6KIE6"/>
<dbReference type="iPTMnet" id="C6KIE6"/>
<dbReference type="PaxDb" id="3702-AT4G34390.1"/>
<dbReference type="ProteomicsDB" id="234371"/>
<dbReference type="EnsemblPlants" id="AT4G34390.1">
    <property type="protein sequence ID" value="AT4G34390.1"/>
    <property type="gene ID" value="AT4G34390"/>
</dbReference>
<dbReference type="GeneID" id="829589"/>
<dbReference type="Gramene" id="AT4G34390.1">
    <property type="protein sequence ID" value="AT4G34390.1"/>
    <property type="gene ID" value="AT4G34390"/>
</dbReference>
<dbReference type="KEGG" id="ath:AT4G34390"/>
<dbReference type="Araport" id="AT4G34390"/>
<dbReference type="TAIR" id="AT4G34390">
    <property type="gene designation" value="XLG2"/>
</dbReference>
<dbReference type="eggNOG" id="KOG0082">
    <property type="taxonomic scope" value="Eukaryota"/>
</dbReference>
<dbReference type="HOGENOM" id="CLU_006703_0_1_1"/>
<dbReference type="InParanoid" id="C6KIE6"/>
<dbReference type="OMA" id="MEFSFPV"/>
<dbReference type="PhylomeDB" id="C6KIE6"/>
<dbReference type="PRO" id="PR:C6KIE6"/>
<dbReference type="Proteomes" id="UP000006548">
    <property type="component" value="Chromosome 4"/>
</dbReference>
<dbReference type="ExpressionAtlas" id="C6KIE6">
    <property type="expression patterns" value="baseline and differential"/>
</dbReference>
<dbReference type="GO" id="GO:0005634">
    <property type="term" value="C:nucleus"/>
    <property type="evidence" value="ECO:0000314"/>
    <property type="project" value="TAIR"/>
</dbReference>
<dbReference type="GO" id="GO:0031683">
    <property type="term" value="F:G-protein beta/gamma-subunit complex binding"/>
    <property type="evidence" value="ECO:0007669"/>
    <property type="project" value="InterPro"/>
</dbReference>
<dbReference type="GO" id="GO:0005525">
    <property type="term" value="F:GTP binding"/>
    <property type="evidence" value="ECO:0000314"/>
    <property type="project" value="UniProtKB"/>
</dbReference>
<dbReference type="GO" id="GO:0003924">
    <property type="term" value="F:GTPase activity"/>
    <property type="evidence" value="ECO:0000314"/>
    <property type="project" value="UniProtKB"/>
</dbReference>
<dbReference type="GO" id="GO:0008270">
    <property type="term" value="F:zinc ion binding"/>
    <property type="evidence" value="ECO:0007669"/>
    <property type="project" value="UniProtKB-KW"/>
</dbReference>
<dbReference type="GO" id="GO:0042742">
    <property type="term" value="P:defense response to bacterium"/>
    <property type="evidence" value="ECO:0000315"/>
    <property type="project" value="UniProtKB"/>
</dbReference>
<dbReference type="GO" id="GO:0007186">
    <property type="term" value="P:G protein-coupled receptor signaling pathway"/>
    <property type="evidence" value="ECO:0007669"/>
    <property type="project" value="InterPro"/>
</dbReference>
<dbReference type="GO" id="GO:0009617">
    <property type="term" value="P:response to bacterium"/>
    <property type="evidence" value="ECO:0000270"/>
    <property type="project" value="UniProtKB"/>
</dbReference>
<dbReference type="CDD" id="cd00066">
    <property type="entry name" value="G-alpha"/>
    <property type="match status" value="1"/>
</dbReference>
<dbReference type="FunFam" id="1.10.400.10:FF:000013">
    <property type="entry name" value="Extra-large guanine nucleotide-binding protein 2"/>
    <property type="match status" value="1"/>
</dbReference>
<dbReference type="Gene3D" id="1.10.400.10">
    <property type="entry name" value="GI Alpha 1, domain 2-like"/>
    <property type="match status" value="1"/>
</dbReference>
<dbReference type="Gene3D" id="3.40.50.300">
    <property type="entry name" value="P-loop containing nucleotide triphosphate hydrolases"/>
    <property type="match status" value="1"/>
</dbReference>
<dbReference type="InterPro" id="IPR001019">
    <property type="entry name" value="Gprotein_alpha_su"/>
</dbReference>
<dbReference type="InterPro" id="IPR011025">
    <property type="entry name" value="GproteinA_insert"/>
</dbReference>
<dbReference type="InterPro" id="IPR027417">
    <property type="entry name" value="P-loop_NTPase"/>
</dbReference>
<dbReference type="InterPro" id="IPR053057">
    <property type="entry name" value="XLG_GTP-binding"/>
</dbReference>
<dbReference type="PANTHER" id="PTHR36486">
    <property type="entry name" value="OS01G0977800 PROTEIN"/>
    <property type="match status" value="1"/>
</dbReference>
<dbReference type="PANTHER" id="PTHR36486:SF4">
    <property type="entry name" value="PH DOMAIN-CONTAINING PROTEIN"/>
    <property type="match status" value="1"/>
</dbReference>
<dbReference type="Pfam" id="PF00503">
    <property type="entry name" value="G-alpha"/>
    <property type="match status" value="1"/>
</dbReference>
<dbReference type="SMART" id="SM00275">
    <property type="entry name" value="G_alpha"/>
    <property type="match status" value="1"/>
</dbReference>
<dbReference type="SUPFAM" id="SSF52540">
    <property type="entry name" value="P-loop containing nucleoside triphosphate hydrolases"/>
    <property type="match status" value="1"/>
</dbReference>
<dbReference type="SUPFAM" id="SSF47895">
    <property type="entry name" value="Transducin (alpha subunit), insertion domain"/>
    <property type="match status" value="1"/>
</dbReference>
<dbReference type="PROSITE" id="PS51882">
    <property type="entry name" value="G_ALPHA"/>
    <property type="match status" value="1"/>
</dbReference>
<reference key="1">
    <citation type="journal article" date="2008" name="Plant J.">
        <title>Arabidopsis extra-large G proteins (XLGs) regulate root morphogenesis.</title>
        <authorList>
            <person name="Ding L."/>
            <person name="Pandey S."/>
            <person name="Assmann S.M."/>
        </authorList>
    </citation>
    <scope>NUCLEOTIDE SEQUENCE [MRNA]</scope>
    <scope>GENE FAMILY</scope>
    <scope>NOMENCLATURE</scope>
    <scope>SUBCELLULAR LOCATION</scope>
    <scope>TISSUE SPECIFICITY</scope>
    <scope>DISRUPTION PHENOTYPE</scope>
    <scope>FUNCTION</scope>
    <source>
        <strain>cv. Columbia</strain>
    </source>
</reference>
<reference key="2">
    <citation type="journal article" date="1999" name="Nature">
        <title>Sequence and analysis of chromosome 4 of the plant Arabidopsis thaliana.</title>
        <authorList>
            <person name="Mayer K.F.X."/>
            <person name="Schueller C."/>
            <person name="Wambutt R."/>
            <person name="Murphy G."/>
            <person name="Volckaert G."/>
            <person name="Pohl T."/>
            <person name="Duesterhoeft A."/>
            <person name="Stiekema W."/>
            <person name="Entian K.-D."/>
            <person name="Terryn N."/>
            <person name="Harris B."/>
            <person name="Ansorge W."/>
            <person name="Brandt P."/>
            <person name="Grivell L.A."/>
            <person name="Rieger M."/>
            <person name="Weichselgartner M."/>
            <person name="de Simone V."/>
            <person name="Obermaier B."/>
            <person name="Mache R."/>
            <person name="Mueller M."/>
            <person name="Kreis M."/>
            <person name="Delseny M."/>
            <person name="Puigdomenech P."/>
            <person name="Watson M."/>
            <person name="Schmidtheini T."/>
            <person name="Reichert B."/>
            <person name="Portetelle D."/>
            <person name="Perez-Alonso M."/>
            <person name="Boutry M."/>
            <person name="Bancroft I."/>
            <person name="Vos P."/>
            <person name="Hoheisel J."/>
            <person name="Zimmermann W."/>
            <person name="Wedler H."/>
            <person name="Ridley P."/>
            <person name="Langham S.-A."/>
            <person name="McCullagh B."/>
            <person name="Bilham L."/>
            <person name="Robben J."/>
            <person name="van der Schueren J."/>
            <person name="Grymonprez B."/>
            <person name="Chuang Y.-J."/>
            <person name="Vandenbussche F."/>
            <person name="Braeken M."/>
            <person name="Weltjens I."/>
            <person name="Voet M."/>
            <person name="Bastiaens I."/>
            <person name="Aert R."/>
            <person name="Defoor E."/>
            <person name="Weitzenegger T."/>
            <person name="Bothe G."/>
            <person name="Ramsperger U."/>
            <person name="Hilbert H."/>
            <person name="Braun M."/>
            <person name="Holzer E."/>
            <person name="Brandt A."/>
            <person name="Peters S."/>
            <person name="van Staveren M."/>
            <person name="Dirkse W."/>
            <person name="Mooijman P."/>
            <person name="Klein Lankhorst R."/>
            <person name="Rose M."/>
            <person name="Hauf J."/>
            <person name="Koetter P."/>
            <person name="Berneiser S."/>
            <person name="Hempel S."/>
            <person name="Feldpausch M."/>
            <person name="Lamberth S."/>
            <person name="Van den Daele H."/>
            <person name="De Keyser A."/>
            <person name="Buysshaert C."/>
            <person name="Gielen J."/>
            <person name="Villarroel R."/>
            <person name="De Clercq R."/>
            <person name="van Montagu M."/>
            <person name="Rogers J."/>
            <person name="Cronin A."/>
            <person name="Quail M.A."/>
            <person name="Bray-Allen S."/>
            <person name="Clark L."/>
            <person name="Doggett J."/>
            <person name="Hall S."/>
            <person name="Kay M."/>
            <person name="Lennard N."/>
            <person name="McLay K."/>
            <person name="Mayes R."/>
            <person name="Pettett A."/>
            <person name="Rajandream M.A."/>
            <person name="Lyne M."/>
            <person name="Benes V."/>
            <person name="Rechmann S."/>
            <person name="Borkova D."/>
            <person name="Bloecker H."/>
            <person name="Scharfe M."/>
            <person name="Grimm M."/>
            <person name="Loehnert T.-H."/>
            <person name="Dose S."/>
            <person name="de Haan M."/>
            <person name="Maarse A.C."/>
            <person name="Schaefer M."/>
            <person name="Mueller-Auer S."/>
            <person name="Gabel C."/>
            <person name="Fuchs M."/>
            <person name="Fartmann B."/>
            <person name="Granderath K."/>
            <person name="Dauner D."/>
            <person name="Herzl A."/>
            <person name="Neumann S."/>
            <person name="Argiriou A."/>
            <person name="Vitale D."/>
            <person name="Liguori R."/>
            <person name="Piravandi E."/>
            <person name="Massenet O."/>
            <person name="Quigley F."/>
            <person name="Clabauld G."/>
            <person name="Muendlein A."/>
            <person name="Felber R."/>
            <person name="Schnabl S."/>
            <person name="Hiller R."/>
            <person name="Schmidt W."/>
            <person name="Lecharny A."/>
            <person name="Aubourg S."/>
            <person name="Chefdor F."/>
            <person name="Cooke R."/>
            <person name="Berger C."/>
            <person name="Monfort A."/>
            <person name="Casacuberta E."/>
            <person name="Gibbons T."/>
            <person name="Weber N."/>
            <person name="Vandenbol M."/>
            <person name="Bargues M."/>
            <person name="Terol J."/>
            <person name="Torres A."/>
            <person name="Perez-Perez A."/>
            <person name="Purnelle B."/>
            <person name="Bent E."/>
            <person name="Johnson S."/>
            <person name="Tacon D."/>
            <person name="Jesse T."/>
            <person name="Heijnen L."/>
            <person name="Schwarz S."/>
            <person name="Scholler P."/>
            <person name="Heber S."/>
            <person name="Francs P."/>
            <person name="Bielke C."/>
            <person name="Frishman D."/>
            <person name="Haase D."/>
            <person name="Lemcke K."/>
            <person name="Mewes H.-W."/>
            <person name="Stocker S."/>
            <person name="Zaccaria P."/>
            <person name="Bevan M."/>
            <person name="Wilson R.K."/>
            <person name="de la Bastide M."/>
            <person name="Habermann K."/>
            <person name="Parnell L."/>
            <person name="Dedhia N."/>
            <person name="Gnoj L."/>
            <person name="Schutz K."/>
            <person name="Huang E."/>
            <person name="Spiegel L."/>
            <person name="Sekhon M."/>
            <person name="Murray J."/>
            <person name="Sheet P."/>
            <person name="Cordes M."/>
            <person name="Abu-Threideh J."/>
            <person name="Stoneking T."/>
            <person name="Kalicki J."/>
            <person name="Graves T."/>
            <person name="Harmon G."/>
            <person name="Edwards J."/>
            <person name="Latreille P."/>
            <person name="Courtney L."/>
            <person name="Cloud J."/>
            <person name="Abbott A."/>
            <person name="Scott K."/>
            <person name="Johnson D."/>
            <person name="Minx P."/>
            <person name="Bentley D."/>
            <person name="Fulton B."/>
            <person name="Miller N."/>
            <person name="Greco T."/>
            <person name="Kemp K."/>
            <person name="Kramer J."/>
            <person name="Fulton L."/>
            <person name="Mardis E."/>
            <person name="Dante M."/>
            <person name="Pepin K."/>
            <person name="Hillier L.W."/>
            <person name="Nelson J."/>
            <person name="Spieth J."/>
            <person name="Ryan E."/>
            <person name="Andrews S."/>
            <person name="Geisel C."/>
            <person name="Layman D."/>
            <person name="Du H."/>
            <person name="Ali J."/>
            <person name="Berghoff A."/>
            <person name="Jones K."/>
            <person name="Drone K."/>
            <person name="Cotton M."/>
            <person name="Joshu C."/>
            <person name="Antonoiu B."/>
            <person name="Zidanic M."/>
            <person name="Strong C."/>
            <person name="Sun H."/>
            <person name="Lamar B."/>
            <person name="Yordan C."/>
            <person name="Ma P."/>
            <person name="Zhong J."/>
            <person name="Preston R."/>
            <person name="Vil D."/>
            <person name="Shekher M."/>
            <person name="Matero A."/>
            <person name="Shah R."/>
            <person name="Swaby I.K."/>
            <person name="O'Shaughnessy A."/>
            <person name="Rodriguez M."/>
            <person name="Hoffman J."/>
            <person name="Till S."/>
            <person name="Granat S."/>
            <person name="Shohdy N."/>
            <person name="Hasegawa A."/>
            <person name="Hameed A."/>
            <person name="Lodhi M."/>
            <person name="Johnson A."/>
            <person name="Chen E."/>
            <person name="Marra M.A."/>
            <person name="Martienssen R."/>
            <person name="McCombie W.R."/>
        </authorList>
    </citation>
    <scope>NUCLEOTIDE SEQUENCE [LARGE SCALE GENOMIC DNA]</scope>
    <source>
        <strain>cv. Columbia</strain>
    </source>
</reference>
<reference key="3">
    <citation type="journal article" date="2017" name="Plant J.">
        <title>Araport11: a complete reannotation of the Arabidopsis thaliana reference genome.</title>
        <authorList>
            <person name="Cheng C.Y."/>
            <person name="Krishnakumar V."/>
            <person name="Chan A.P."/>
            <person name="Thibaud-Nissen F."/>
            <person name="Schobel S."/>
            <person name="Town C.D."/>
        </authorList>
    </citation>
    <scope>GENOME REANNOTATION</scope>
    <source>
        <strain>cv. Columbia</strain>
    </source>
</reference>
<reference key="4">
    <citation type="journal article" date="2009" name="Mol. Plant">
        <title>Arabidopsis extra large G-protein 2 (XLG2) interacts with the Gbeta subunit of heterotrimeric G protein and functions in disease resistance.</title>
        <authorList>
            <person name="Zhu H."/>
            <person name="Li G.J."/>
            <person name="Ding L."/>
            <person name="Cui X."/>
            <person name="Berg H."/>
            <person name="Assmann S.M."/>
            <person name="Xia Y."/>
        </authorList>
    </citation>
    <scope>INDUCTION</scope>
    <scope>DISRUPTION PHENOTYPE</scope>
    <scope>FUNCTION</scope>
    <scope>INTERACTION WITH GB1</scope>
</reference>
<reference key="5">
    <citation type="journal article" date="2012" name="J. Biol. Chem.">
        <title>Ca2+-dependent GTPase, extra-large G protein 2 (XLG2), promotes activation of DNA-binding protein related to vernalization 1 (RTV1), leading to activation of floral integrator genes and early flowering in Arabidopsis.</title>
        <authorList>
            <person name="Heo J.B."/>
            <person name="Sung S."/>
            <person name="Assmann S.M."/>
        </authorList>
    </citation>
    <scope>INTERACTION WITH RTV1</scope>
    <scope>FUNCTION</scope>
    <scope>COFACTOR</scope>
    <scope>GTP-BINDING</scope>
    <scope>MUTAGENESIS OF THR-476</scope>
</reference>
<evidence type="ECO:0000250" key="1"/>
<evidence type="ECO:0000255" key="2"/>
<evidence type="ECO:0000255" key="3">
    <source>
        <dbReference type="PROSITE-ProRule" id="PRU01230"/>
    </source>
</evidence>
<evidence type="ECO:0000256" key="4">
    <source>
        <dbReference type="SAM" id="MobiDB-lite"/>
    </source>
</evidence>
<evidence type="ECO:0000269" key="5">
    <source>
    </source>
</evidence>
<evidence type="ECO:0000269" key="6">
    <source>
    </source>
</evidence>
<evidence type="ECO:0000269" key="7">
    <source>
    </source>
</evidence>
<evidence type="ECO:0000305" key="8"/>
<evidence type="ECO:0000305" key="9">
    <source>
    </source>
</evidence>
<protein>
    <recommendedName>
        <fullName>Extra-large guanine nucleotide-binding protein 2</fullName>
    </recommendedName>
    <alternativeName>
        <fullName>Extra-large GTP-binding protein 2</fullName>
        <shortName>Extra-large G-protein 2</shortName>
    </alternativeName>
</protein>
<comment type="function">
    <text evidence="1 5 6 7">Guanine nucleotide-binding proteins (G proteins) are involved as modulators or transducers in various transmembrane signaling systems (By similarity). Binds GTP with specificity. Plays a role in the root morphogenesis by regulation of the cell proliferation. Acts as a positive regulator in resistance to pathogen that triggers the salicylic acid (SA) pathway. Promotes the DNA binding activity of RTV1 specifically to promoter regions of FT and SOC1 in vivo leading to the activation of floral integrator genes.</text>
</comment>
<comment type="cofactor">
    <cofactor evidence="7">
        <name>Ca(2+)</name>
        <dbReference type="ChEBI" id="CHEBI:29108"/>
    </cofactor>
</comment>
<comment type="subunit">
    <text evidence="6 7">Interacts with GB1. Component of a G-protein complex at least composed of XLG2 and GB1. Interacts with RTV1.</text>
</comment>
<comment type="interaction">
    <interactant intactId="EBI-6868693">
        <id>C6KIE6</id>
    </interactant>
    <interactant intactId="EBI-6869217">
        <id>Q9XIB5</id>
        <label>REM19</label>
    </interactant>
    <organismsDiffer>false</organismsDiffer>
    <experiments>4</experiments>
</comment>
<comment type="subcellular location">
    <subcellularLocation>
        <location evidence="5">Nucleus</location>
    </subcellularLocation>
</comment>
<comment type="tissue specificity">
    <text evidence="5">Ubiquitous. Strongly expressed in vascular tissues, root and shoot meristems and lateral root primordia.</text>
</comment>
<comment type="induction">
    <text evidence="6">By bacterial pathogen P.syringae.</text>
</comment>
<comment type="domain">
    <text evidence="1">The helical domain (492-627) is required for self-activation.</text>
</comment>
<comment type="disruption phenotype">
    <text evidence="5 6">No visible phenotype. Enhanced susceptibility to P.syringae.</text>
</comment>
<comment type="miscellaneous">
    <text evidence="9">Dark-grown xlg1-1 xlg2-1 xlg3-1 triple mutant plants showed markedly increased primary root length compared with wild-type plants. Dark-grown roots of the xlg triple mutants also showed altered sensitivity to sugars, abscisic acid (ABA) hyposensitivity and ethylene hypersensitivity, whereas seed germination in xlg triple mutants was hypersensitive to osmotic stress and ABA (PubMed:17999646).</text>
</comment>
<comment type="similarity">
    <text evidence="8">Belongs to the G-alpha family. XLG subfamily.</text>
</comment>
<comment type="sequence caution" evidence="8">
    <conflict type="erroneous gene model prediction">
        <sequence resource="EMBL-CDS" id="CAB36716"/>
    </conflict>
</comment>
<comment type="sequence caution" evidence="8">
    <conflict type="erroneous gene model prediction">
        <sequence resource="EMBL-CDS" id="CAB80156"/>
    </conflict>
</comment>
<name>XLG2_ARATH</name>
<organism>
    <name type="scientific">Arabidopsis thaliana</name>
    <name type="common">Mouse-ear cress</name>
    <dbReference type="NCBI Taxonomy" id="3702"/>
    <lineage>
        <taxon>Eukaryota</taxon>
        <taxon>Viridiplantae</taxon>
        <taxon>Streptophyta</taxon>
        <taxon>Embryophyta</taxon>
        <taxon>Tracheophyta</taxon>
        <taxon>Spermatophyta</taxon>
        <taxon>Magnoliopsida</taxon>
        <taxon>eudicotyledons</taxon>
        <taxon>Gunneridae</taxon>
        <taxon>Pentapetalae</taxon>
        <taxon>rosids</taxon>
        <taxon>malvids</taxon>
        <taxon>Brassicales</taxon>
        <taxon>Brassicaceae</taxon>
        <taxon>Camelineae</taxon>
        <taxon>Arabidopsis</taxon>
    </lineage>
</organism>
<keyword id="KW-0106">Calcium</keyword>
<keyword id="KW-0342">GTP-binding</keyword>
<keyword id="KW-0479">Metal-binding</keyword>
<keyword id="KW-0547">Nucleotide-binding</keyword>
<keyword id="KW-0539">Nucleus</keyword>
<keyword id="KW-0611">Plant defense</keyword>
<keyword id="KW-1185">Reference proteome</keyword>
<keyword id="KW-0807">Transducer</keyword>
<keyword id="KW-0862">Zinc</keyword>
<keyword id="KW-0863">Zinc-finger</keyword>
<sequence>MAAVIRKLLPFPSPNPKRDNRESDDDDETSSGYRIEYSFASEYKGPLIANVPRALPVEVDQIPTALPVSFSSLRSGISYPVAPLVMTKDTKRPPDSGIEKKNGFVDSAAGSSVVLIGRDVVSGSSSSSSSKRLDVPEEVKSPADFRLSPSSPLSASAREEDHLDDDRVSDVGPRAVRFVEPFQSSECDESSYVSDGESIAATHRAERKGKRGSCYRCQLGNRFTEKEVCIVCDAKYCFNCVRRAMGAMPEGRKCQACIGYRIDESKRASLGKCSRMLKRHLTDSELRQVMNAEITCKANQLPSRLIIVNDKPLSEDELYTLQTCPNPPKKLKPGHYWYDKVAGYWGKIGEKPSQIISPNNSIGGYISEKVSNGDTEIYINGREITKPELTMLKWAGVQCEGKPHFWVDSDGSYREEGQKHPIGNIWSKKRAKIACAVFSLPVPPASSAVEPYDVPLYEQKMLNKLLLIGSEKGGATTIYKQARSLYNVSFSLEDRERIKFIIQTNLYTYLAMVLEAHERFEKEMSNDQSSGNVGDETSAKPGNSINPRLKHFSDWVLKEKEDGNLKIFPPSSRENAQTVADLWRVPAIQATYKRLRDTLPRNAVYFLERILEISRSEYDPSDMDILQAEGLSSMEGLSCVDFSFPSTSQEESLESDYQHDTDMKYQLIRLNPRSLGENWKLLEMFEDADLVIFCVSLTDYAENIEDGEGNIVNKMLATKQLFENMVTHPSLANKRFLLVLTKFDLLEEKIEEVPLRTCEWFEDFNPLISQNQTSRHNPPMAQRAFHYIGYKFKRLYDSILEPVNMRGRSFKPKLFVCQVSLESDTVDNALRYAREILKWHVEETSMFQEMSTTSIEASSSS</sequence>
<feature type="chain" id="PRO_0000423398" description="Extra-large guanine nucleotide-binding protein 2">
    <location>
        <begin position="1"/>
        <end position="861"/>
    </location>
</feature>
<feature type="domain" description="G-alpha" evidence="3">
    <location>
        <begin position="461"/>
        <end position="853"/>
    </location>
</feature>
<feature type="zinc finger region" description="RING-type; degenerate">
    <location>
        <begin position="214"/>
        <end position="257"/>
    </location>
</feature>
<feature type="region of interest" description="Disordered" evidence="4">
    <location>
        <begin position="1"/>
        <end position="32"/>
    </location>
</feature>
<feature type="region of interest" description="Disordered" evidence="4">
    <location>
        <begin position="121"/>
        <end position="168"/>
    </location>
</feature>
<feature type="region of interest" description="G1 motif" evidence="3">
    <location>
        <begin position="464"/>
        <end position="477"/>
    </location>
</feature>
<feature type="region of interest" description="Disordered" evidence="4">
    <location>
        <begin position="523"/>
        <end position="545"/>
    </location>
</feature>
<feature type="region of interest" description="G2 motif" evidence="3">
    <location>
        <begin position="624"/>
        <end position="632"/>
    </location>
</feature>
<feature type="region of interest" description="G3 motif" evidence="3">
    <location>
        <begin position="665"/>
        <end position="674"/>
    </location>
</feature>
<feature type="region of interest" description="G4 motif" evidence="3">
    <location>
        <begin position="737"/>
        <end position="744"/>
    </location>
</feature>
<feature type="region of interest" description="G5 motif" evidence="3">
    <location>
        <begin position="818"/>
        <end position="823"/>
    </location>
</feature>
<feature type="short sequence motif" description="Nuclear localization signal" evidence="2">
    <location>
        <begin position="204"/>
        <end position="211"/>
    </location>
</feature>
<feature type="compositionally biased region" description="Basic and acidic residues" evidence="4">
    <location>
        <begin position="131"/>
        <end position="143"/>
    </location>
</feature>
<feature type="compositionally biased region" description="Low complexity" evidence="4">
    <location>
        <begin position="146"/>
        <end position="156"/>
    </location>
</feature>
<feature type="compositionally biased region" description="Basic and acidic residues" evidence="4">
    <location>
        <begin position="157"/>
        <end position="168"/>
    </location>
</feature>
<feature type="binding site" evidence="1">
    <location>
        <begin position="469"/>
        <end position="477"/>
    </location>
    <ligand>
        <name>GTP</name>
        <dbReference type="ChEBI" id="CHEBI:37565"/>
    </ligand>
</feature>
<feature type="binding site" evidence="2">
    <location>
        <position position="476"/>
    </location>
    <ligand>
        <name>Ca(2+)</name>
        <dbReference type="ChEBI" id="CHEBI:29108"/>
    </ligand>
</feature>
<feature type="binding site" evidence="1">
    <location>
        <begin position="624"/>
        <end position="632"/>
    </location>
    <ligand>
        <name>GTP</name>
        <dbReference type="ChEBI" id="CHEBI:37565"/>
    </ligand>
</feature>
<feature type="binding site" evidence="2">
    <location>
        <position position="632"/>
    </location>
    <ligand>
        <name>Ca(2+)</name>
        <dbReference type="ChEBI" id="CHEBI:29108"/>
    </ligand>
</feature>
<feature type="binding site" evidence="1">
    <location>
        <begin position="741"/>
        <end position="744"/>
    </location>
    <ligand>
        <name>GTP</name>
        <dbReference type="ChEBI" id="CHEBI:37565"/>
    </ligand>
</feature>
<feature type="mutagenesis site" description="Strongly reduces GTP-binding and GTPase activity." evidence="7">
    <original>T</original>
    <variation>A</variation>
    <location>
        <position position="476"/>
    </location>
</feature>
<accession>C6KIE6</accession>
<accession>Q9SZ04</accession>
<gene>
    <name type="primary">XLG2</name>
    <name type="ordered locus">At4g34390</name>
    <name type="ORF">F10M10.160</name>
</gene>